<gene>
    <name evidence="2" type="primary">tal</name>
    <name type="ordered locus">ACP_2636</name>
</gene>
<comment type="function">
    <text evidence="2">Transaldolase is important for the balance of metabolites in the pentose-phosphate pathway.</text>
</comment>
<comment type="catalytic activity">
    <reaction evidence="2">
        <text>D-sedoheptulose 7-phosphate + D-glyceraldehyde 3-phosphate = D-erythrose 4-phosphate + beta-D-fructose 6-phosphate</text>
        <dbReference type="Rhea" id="RHEA:17053"/>
        <dbReference type="ChEBI" id="CHEBI:16897"/>
        <dbReference type="ChEBI" id="CHEBI:57483"/>
        <dbReference type="ChEBI" id="CHEBI:57634"/>
        <dbReference type="ChEBI" id="CHEBI:59776"/>
        <dbReference type="EC" id="2.2.1.2"/>
    </reaction>
</comment>
<comment type="pathway">
    <text evidence="2">Carbohydrate degradation; pentose phosphate pathway; D-glyceraldehyde 3-phosphate and beta-D-fructose 6-phosphate from D-ribose 5-phosphate and D-xylulose 5-phosphate (non-oxidative stage): step 2/3.</text>
</comment>
<comment type="subunit">
    <text evidence="1">Homodimer.</text>
</comment>
<comment type="subcellular location">
    <subcellularLocation>
        <location evidence="2">Cytoplasm</location>
    </subcellularLocation>
</comment>
<comment type="similarity">
    <text evidence="2">Belongs to the transaldolase family. Type 1 subfamily.</text>
</comment>
<feature type="chain" id="PRO_1000198448" description="Transaldolase">
    <location>
        <begin position="1"/>
        <end position="333"/>
    </location>
</feature>
<feature type="active site" description="Schiff-base intermediate with substrate" evidence="2">
    <location>
        <position position="136"/>
    </location>
</feature>
<evidence type="ECO:0000250" key="1"/>
<evidence type="ECO:0000255" key="2">
    <source>
        <dbReference type="HAMAP-Rule" id="MF_00492"/>
    </source>
</evidence>
<proteinExistence type="inferred from homology"/>
<name>TAL_ACIC5</name>
<sequence>MSQSLLAQLRKMTTVVADTGDIQAIEKVRPQDATTNPSLITAAAGMPAYQKIVDDTLLDAKKQLGDSAPSDKVAKLAFENLAVAFGKQILAIIPGRVSTEVDARLSYDTEATIKQAHAIIEKYQKQGIGRERVLIKIASTWEGIRAAEQLEKEGIHCNLTLLFGMHQAVACAEAGVTLISPFVGRILDWYKKDTGKDYVGADDPGVQSVTRIYNYFKKFGYKTVVMGASFRNTGEIIELAGCDLLTISPKLLEELDAKEAELPRKLDAEKAKGMEIERITVDKATFDKMHAEDRMAHDKLKEGIEGFSEALENLEKLLAKRLEELSAEPVGAK</sequence>
<reference key="1">
    <citation type="journal article" date="2009" name="Appl. Environ. Microbiol.">
        <title>Three genomes from the phylum Acidobacteria provide insight into the lifestyles of these microorganisms in soils.</title>
        <authorList>
            <person name="Ward N.L."/>
            <person name="Challacombe J.F."/>
            <person name="Janssen P.H."/>
            <person name="Henrissat B."/>
            <person name="Coutinho P.M."/>
            <person name="Wu M."/>
            <person name="Xie G."/>
            <person name="Haft D.H."/>
            <person name="Sait M."/>
            <person name="Badger J."/>
            <person name="Barabote R.D."/>
            <person name="Bradley B."/>
            <person name="Brettin T.S."/>
            <person name="Brinkac L.M."/>
            <person name="Bruce D."/>
            <person name="Creasy T."/>
            <person name="Daugherty S.C."/>
            <person name="Davidsen T.M."/>
            <person name="DeBoy R.T."/>
            <person name="Detter J.C."/>
            <person name="Dodson R.J."/>
            <person name="Durkin A.S."/>
            <person name="Ganapathy A."/>
            <person name="Gwinn-Giglio M."/>
            <person name="Han C.S."/>
            <person name="Khouri H."/>
            <person name="Kiss H."/>
            <person name="Kothari S.P."/>
            <person name="Madupu R."/>
            <person name="Nelson K.E."/>
            <person name="Nelson W.C."/>
            <person name="Paulsen I."/>
            <person name="Penn K."/>
            <person name="Ren Q."/>
            <person name="Rosovitz M.J."/>
            <person name="Selengut J.D."/>
            <person name="Shrivastava S."/>
            <person name="Sullivan S.A."/>
            <person name="Tapia R."/>
            <person name="Thompson L.S."/>
            <person name="Watkins K.L."/>
            <person name="Yang Q."/>
            <person name="Yu C."/>
            <person name="Zafar N."/>
            <person name="Zhou L."/>
            <person name="Kuske C.R."/>
        </authorList>
    </citation>
    <scope>NUCLEOTIDE SEQUENCE [LARGE SCALE GENOMIC DNA]</scope>
    <source>
        <strain>ATCC 51196 / DSM 11244 / BCRC 80197 / JCM 7670 / NBRC 15755 / NCIMB 13165 / 161</strain>
    </source>
</reference>
<organism>
    <name type="scientific">Acidobacterium capsulatum (strain ATCC 51196 / DSM 11244 / BCRC 80197 / JCM 7670 / NBRC 15755 / NCIMB 13165 / 161)</name>
    <dbReference type="NCBI Taxonomy" id="240015"/>
    <lineage>
        <taxon>Bacteria</taxon>
        <taxon>Pseudomonadati</taxon>
        <taxon>Acidobacteriota</taxon>
        <taxon>Terriglobia</taxon>
        <taxon>Terriglobales</taxon>
        <taxon>Acidobacteriaceae</taxon>
        <taxon>Acidobacterium</taxon>
    </lineage>
</organism>
<keyword id="KW-0963">Cytoplasm</keyword>
<keyword id="KW-0570">Pentose shunt</keyword>
<keyword id="KW-1185">Reference proteome</keyword>
<keyword id="KW-0704">Schiff base</keyword>
<keyword id="KW-0808">Transferase</keyword>
<accession>C1F2H6</accession>
<protein>
    <recommendedName>
        <fullName evidence="2">Transaldolase</fullName>
        <ecNumber evidence="2">2.2.1.2</ecNumber>
    </recommendedName>
</protein>
<dbReference type="EC" id="2.2.1.2" evidence="2"/>
<dbReference type="EMBL" id="CP001472">
    <property type="protein sequence ID" value="ACO31507.1"/>
    <property type="molecule type" value="Genomic_DNA"/>
</dbReference>
<dbReference type="RefSeq" id="WP_015897701.1">
    <property type="nucleotide sequence ID" value="NC_012483.1"/>
</dbReference>
<dbReference type="SMR" id="C1F2H6"/>
<dbReference type="FunCoup" id="C1F2H6">
    <property type="interactions" value="510"/>
</dbReference>
<dbReference type="STRING" id="240015.ACP_2636"/>
<dbReference type="KEGG" id="aca:ACP_2636"/>
<dbReference type="eggNOG" id="COG0176">
    <property type="taxonomic scope" value="Bacteria"/>
</dbReference>
<dbReference type="HOGENOM" id="CLU_047470_0_0_0"/>
<dbReference type="InParanoid" id="C1F2H6"/>
<dbReference type="OrthoDB" id="9807051at2"/>
<dbReference type="UniPathway" id="UPA00115">
    <property type="reaction ID" value="UER00414"/>
</dbReference>
<dbReference type="Proteomes" id="UP000002207">
    <property type="component" value="Chromosome"/>
</dbReference>
<dbReference type="GO" id="GO:0005737">
    <property type="term" value="C:cytoplasm"/>
    <property type="evidence" value="ECO:0007669"/>
    <property type="project" value="UniProtKB-SubCell"/>
</dbReference>
<dbReference type="GO" id="GO:0004801">
    <property type="term" value="F:transaldolase activity"/>
    <property type="evidence" value="ECO:0000250"/>
    <property type="project" value="UniProtKB"/>
</dbReference>
<dbReference type="GO" id="GO:0005975">
    <property type="term" value="P:carbohydrate metabolic process"/>
    <property type="evidence" value="ECO:0007669"/>
    <property type="project" value="InterPro"/>
</dbReference>
<dbReference type="GO" id="GO:0006098">
    <property type="term" value="P:pentose-phosphate shunt"/>
    <property type="evidence" value="ECO:0007669"/>
    <property type="project" value="UniProtKB-UniRule"/>
</dbReference>
<dbReference type="CDD" id="cd00957">
    <property type="entry name" value="Transaldolase_TalAB"/>
    <property type="match status" value="1"/>
</dbReference>
<dbReference type="FunFam" id="3.20.20.70:FF:000002">
    <property type="entry name" value="Transaldolase"/>
    <property type="match status" value="1"/>
</dbReference>
<dbReference type="Gene3D" id="3.20.20.70">
    <property type="entry name" value="Aldolase class I"/>
    <property type="match status" value="1"/>
</dbReference>
<dbReference type="HAMAP" id="MF_00492">
    <property type="entry name" value="Transaldolase_1"/>
    <property type="match status" value="1"/>
</dbReference>
<dbReference type="InterPro" id="IPR013785">
    <property type="entry name" value="Aldolase_TIM"/>
</dbReference>
<dbReference type="InterPro" id="IPR001585">
    <property type="entry name" value="TAL/FSA"/>
</dbReference>
<dbReference type="InterPro" id="IPR004730">
    <property type="entry name" value="Transaldolase_1"/>
</dbReference>
<dbReference type="InterPro" id="IPR018225">
    <property type="entry name" value="Transaldolase_AS"/>
</dbReference>
<dbReference type="NCBIfam" id="NF008965">
    <property type="entry name" value="PRK12309.1"/>
    <property type="match status" value="1"/>
</dbReference>
<dbReference type="NCBIfam" id="TIGR00874">
    <property type="entry name" value="talAB"/>
    <property type="match status" value="1"/>
</dbReference>
<dbReference type="PANTHER" id="PTHR10683">
    <property type="entry name" value="TRANSALDOLASE"/>
    <property type="match status" value="1"/>
</dbReference>
<dbReference type="PANTHER" id="PTHR10683:SF18">
    <property type="entry name" value="TRANSALDOLASE"/>
    <property type="match status" value="1"/>
</dbReference>
<dbReference type="Pfam" id="PF00923">
    <property type="entry name" value="TAL_FSA"/>
    <property type="match status" value="1"/>
</dbReference>
<dbReference type="SUPFAM" id="SSF51569">
    <property type="entry name" value="Aldolase"/>
    <property type="match status" value="1"/>
</dbReference>
<dbReference type="PROSITE" id="PS01054">
    <property type="entry name" value="TRANSALDOLASE_1"/>
    <property type="match status" value="1"/>
</dbReference>
<dbReference type="PROSITE" id="PS00958">
    <property type="entry name" value="TRANSALDOLASE_2"/>
    <property type="match status" value="1"/>
</dbReference>